<keyword id="KW-1185">Reference proteome</keyword>
<sequence>MSWMGHHFSRWCKDISVLSSHLPLFSPMPSEDEHLISNLRSHVPARVVVKQPIRGAIGRTTVAAIVQTGGDWSTGLFSVCRDRKICFWGLLCPMCLECDIARHYGECLCWPLLPGSTFALRIGTRERHRIQGTLCEDCVVVHCCWPFSICQVARELKMRTSQLYEICEVPELKNTLV</sequence>
<gene>
    <name type="primary">Plac8l1</name>
</gene>
<comment type="similarity">
    <text evidence="1">Belongs to the cornifelin family.</text>
</comment>
<reference key="1">
    <citation type="journal article" date="2005" name="Science">
        <title>The transcriptional landscape of the mammalian genome.</title>
        <authorList>
            <person name="Carninci P."/>
            <person name="Kasukawa T."/>
            <person name="Katayama S."/>
            <person name="Gough J."/>
            <person name="Frith M.C."/>
            <person name="Maeda N."/>
            <person name="Oyama R."/>
            <person name="Ravasi T."/>
            <person name="Lenhard B."/>
            <person name="Wells C."/>
            <person name="Kodzius R."/>
            <person name="Shimokawa K."/>
            <person name="Bajic V.B."/>
            <person name="Brenner S.E."/>
            <person name="Batalov S."/>
            <person name="Forrest A.R."/>
            <person name="Zavolan M."/>
            <person name="Davis M.J."/>
            <person name="Wilming L.G."/>
            <person name="Aidinis V."/>
            <person name="Allen J.E."/>
            <person name="Ambesi-Impiombato A."/>
            <person name="Apweiler R."/>
            <person name="Aturaliya R.N."/>
            <person name="Bailey T.L."/>
            <person name="Bansal M."/>
            <person name="Baxter L."/>
            <person name="Beisel K.W."/>
            <person name="Bersano T."/>
            <person name="Bono H."/>
            <person name="Chalk A.M."/>
            <person name="Chiu K.P."/>
            <person name="Choudhary V."/>
            <person name="Christoffels A."/>
            <person name="Clutterbuck D.R."/>
            <person name="Crowe M.L."/>
            <person name="Dalla E."/>
            <person name="Dalrymple B.P."/>
            <person name="de Bono B."/>
            <person name="Della Gatta G."/>
            <person name="di Bernardo D."/>
            <person name="Down T."/>
            <person name="Engstrom P."/>
            <person name="Fagiolini M."/>
            <person name="Faulkner G."/>
            <person name="Fletcher C.F."/>
            <person name="Fukushima T."/>
            <person name="Furuno M."/>
            <person name="Futaki S."/>
            <person name="Gariboldi M."/>
            <person name="Georgii-Hemming P."/>
            <person name="Gingeras T.R."/>
            <person name="Gojobori T."/>
            <person name="Green R.E."/>
            <person name="Gustincich S."/>
            <person name="Harbers M."/>
            <person name="Hayashi Y."/>
            <person name="Hensch T.K."/>
            <person name="Hirokawa N."/>
            <person name="Hill D."/>
            <person name="Huminiecki L."/>
            <person name="Iacono M."/>
            <person name="Ikeo K."/>
            <person name="Iwama A."/>
            <person name="Ishikawa T."/>
            <person name="Jakt M."/>
            <person name="Kanapin A."/>
            <person name="Katoh M."/>
            <person name="Kawasawa Y."/>
            <person name="Kelso J."/>
            <person name="Kitamura H."/>
            <person name="Kitano H."/>
            <person name="Kollias G."/>
            <person name="Krishnan S.P."/>
            <person name="Kruger A."/>
            <person name="Kummerfeld S.K."/>
            <person name="Kurochkin I.V."/>
            <person name="Lareau L.F."/>
            <person name="Lazarevic D."/>
            <person name="Lipovich L."/>
            <person name="Liu J."/>
            <person name="Liuni S."/>
            <person name="McWilliam S."/>
            <person name="Madan Babu M."/>
            <person name="Madera M."/>
            <person name="Marchionni L."/>
            <person name="Matsuda H."/>
            <person name="Matsuzawa S."/>
            <person name="Miki H."/>
            <person name="Mignone F."/>
            <person name="Miyake S."/>
            <person name="Morris K."/>
            <person name="Mottagui-Tabar S."/>
            <person name="Mulder N."/>
            <person name="Nakano N."/>
            <person name="Nakauchi H."/>
            <person name="Ng P."/>
            <person name="Nilsson R."/>
            <person name="Nishiguchi S."/>
            <person name="Nishikawa S."/>
            <person name="Nori F."/>
            <person name="Ohara O."/>
            <person name="Okazaki Y."/>
            <person name="Orlando V."/>
            <person name="Pang K.C."/>
            <person name="Pavan W.J."/>
            <person name="Pavesi G."/>
            <person name="Pesole G."/>
            <person name="Petrovsky N."/>
            <person name="Piazza S."/>
            <person name="Reed J."/>
            <person name="Reid J.F."/>
            <person name="Ring B.Z."/>
            <person name="Ringwald M."/>
            <person name="Rost B."/>
            <person name="Ruan Y."/>
            <person name="Salzberg S.L."/>
            <person name="Sandelin A."/>
            <person name="Schneider C."/>
            <person name="Schoenbach C."/>
            <person name="Sekiguchi K."/>
            <person name="Semple C.A."/>
            <person name="Seno S."/>
            <person name="Sessa L."/>
            <person name="Sheng Y."/>
            <person name="Shibata Y."/>
            <person name="Shimada H."/>
            <person name="Shimada K."/>
            <person name="Silva D."/>
            <person name="Sinclair B."/>
            <person name="Sperling S."/>
            <person name="Stupka E."/>
            <person name="Sugiura K."/>
            <person name="Sultana R."/>
            <person name="Takenaka Y."/>
            <person name="Taki K."/>
            <person name="Tammoja K."/>
            <person name="Tan S.L."/>
            <person name="Tang S."/>
            <person name="Taylor M.S."/>
            <person name="Tegner J."/>
            <person name="Teichmann S.A."/>
            <person name="Ueda H.R."/>
            <person name="van Nimwegen E."/>
            <person name="Verardo R."/>
            <person name="Wei C.L."/>
            <person name="Yagi K."/>
            <person name="Yamanishi H."/>
            <person name="Zabarovsky E."/>
            <person name="Zhu S."/>
            <person name="Zimmer A."/>
            <person name="Hide W."/>
            <person name="Bult C."/>
            <person name="Grimmond S.M."/>
            <person name="Teasdale R.D."/>
            <person name="Liu E.T."/>
            <person name="Brusic V."/>
            <person name="Quackenbush J."/>
            <person name="Wahlestedt C."/>
            <person name="Mattick J.S."/>
            <person name="Hume D.A."/>
            <person name="Kai C."/>
            <person name="Sasaki D."/>
            <person name="Tomaru Y."/>
            <person name="Fukuda S."/>
            <person name="Kanamori-Katayama M."/>
            <person name="Suzuki M."/>
            <person name="Aoki J."/>
            <person name="Arakawa T."/>
            <person name="Iida J."/>
            <person name="Imamura K."/>
            <person name="Itoh M."/>
            <person name="Kato T."/>
            <person name="Kawaji H."/>
            <person name="Kawagashira N."/>
            <person name="Kawashima T."/>
            <person name="Kojima M."/>
            <person name="Kondo S."/>
            <person name="Konno H."/>
            <person name="Nakano K."/>
            <person name="Ninomiya N."/>
            <person name="Nishio T."/>
            <person name="Okada M."/>
            <person name="Plessy C."/>
            <person name="Shibata K."/>
            <person name="Shiraki T."/>
            <person name="Suzuki S."/>
            <person name="Tagami M."/>
            <person name="Waki K."/>
            <person name="Watahiki A."/>
            <person name="Okamura-Oho Y."/>
            <person name="Suzuki H."/>
            <person name="Kawai J."/>
            <person name="Hayashizaki Y."/>
        </authorList>
    </citation>
    <scope>NUCLEOTIDE SEQUENCE [LARGE SCALE MRNA]</scope>
    <source>
        <strain>C57BL/6J</strain>
        <tissue>Testis</tissue>
    </source>
</reference>
<reference key="2">
    <citation type="journal article" date="2004" name="Genome Res.">
        <title>The status, quality, and expansion of the NIH full-length cDNA project: the Mammalian Gene Collection (MGC).</title>
        <authorList>
            <consortium name="The MGC Project Team"/>
        </authorList>
    </citation>
    <scope>NUCLEOTIDE SEQUENCE [LARGE SCALE MRNA]</scope>
</reference>
<evidence type="ECO:0000305" key="1"/>
<accession>Q08EJ0</accession>
<accession>Q9DAB1</accession>
<protein>
    <recommendedName>
        <fullName>PLAC8-like protein 1</fullName>
    </recommendedName>
</protein>
<dbReference type="EMBL" id="AK006002">
    <property type="protein sequence ID" value="BAB24360.1"/>
    <property type="molecule type" value="mRNA"/>
</dbReference>
<dbReference type="EMBL" id="BC110558">
    <property type="protein sequence ID" value="AAI10559.1"/>
    <property type="molecule type" value="mRNA"/>
</dbReference>
<dbReference type="EMBL" id="BC110559">
    <property type="protein sequence ID" value="AAI10560.1"/>
    <property type="molecule type" value="mRNA"/>
</dbReference>
<dbReference type="CCDS" id="CCDS50266.1"/>
<dbReference type="RefSeq" id="NP_081348.1">
    <property type="nucleotide sequence ID" value="NM_027072.1"/>
</dbReference>
<dbReference type="FunCoup" id="Q08EJ0">
    <property type="interactions" value="2"/>
</dbReference>
<dbReference type="STRING" id="10090.ENSMUSP00000080111"/>
<dbReference type="PaxDb" id="10090-ENSMUSP00000080111"/>
<dbReference type="Antibodypedia" id="77009">
    <property type="antibodies" value="17 antibodies from 9 providers"/>
</dbReference>
<dbReference type="Ensembl" id="ENSMUST00000081374.4">
    <property type="protein sequence ID" value="ENSMUSP00000080111.3"/>
    <property type="gene ID" value="ENSMUSG00000059455.4"/>
</dbReference>
<dbReference type="GeneID" id="69401"/>
<dbReference type="KEGG" id="mmu:69401"/>
<dbReference type="UCSC" id="uc008etm.2">
    <property type="organism name" value="mouse"/>
</dbReference>
<dbReference type="AGR" id="MGI:1916651"/>
<dbReference type="CTD" id="153770"/>
<dbReference type="MGI" id="MGI:1916651">
    <property type="gene designation" value="Plac8l1"/>
</dbReference>
<dbReference type="VEuPathDB" id="HostDB:ENSMUSG00000059455"/>
<dbReference type="eggNOG" id="ENOG502S2DQ">
    <property type="taxonomic scope" value="Eukaryota"/>
</dbReference>
<dbReference type="GeneTree" id="ENSGT00940000160864"/>
<dbReference type="HOGENOM" id="CLU_083147_3_0_1"/>
<dbReference type="InParanoid" id="Q08EJ0"/>
<dbReference type="OMA" id="FCWPLLP"/>
<dbReference type="OrthoDB" id="1045822at2759"/>
<dbReference type="PhylomeDB" id="Q08EJ0"/>
<dbReference type="TreeFam" id="TF330308"/>
<dbReference type="BioGRID-ORCS" id="69401">
    <property type="hits" value="1 hit in 79 CRISPR screens"/>
</dbReference>
<dbReference type="PRO" id="PR:Q08EJ0"/>
<dbReference type="Proteomes" id="UP000000589">
    <property type="component" value="Chromosome 18"/>
</dbReference>
<dbReference type="RNAct" id="Q08EJ0">
    <property type="molecule type" value="protein"/>
</dbReference>
<dbReference type="Bgee" id="ENSMUSG00000059455">
    <property type="expression patterns" value="Expressed in seminiferous tubule of testis and 19 other cell types or tissues"/>
</dbReference>
<dbReference type="ExpressionAtlas" id="Q08EJ0">
    <property type="expression patterns" value="baseline and differential"/>
</dbReference>
<dbReference type="InterPro" id="IPR006461">
    <property type="entry name" value="PLAC_motif_containing"/>
</dbReference>
<dbReference type="NCBIfam" id="TIGR01571">
    <property type="entry name" value="A_thal_Cys_rich"/>
    <property type="match status" value="1"/>
</dbReference>
<dbReference type="PANTHER" id="PTHR15907">
    <property type="entry name" value="DUF614 FAMILY PROTEIN-RELATED"/>
    <property type="match status" value="1"/>
</dbReference>
<dbReference type="Pfam" id="PF04749">
    <property type="entry name" value="PLAC8"/>
    <property type="match status" value="1"/>
</dbReference>
<organism>
    <name type="scientific">Mus musculus</name>
    <name type="common">Mouse</name>
    <dbReference type="NCBI Taxonomy" id="10090"/>
    <lineage>
        <taxon>Eukaryota</taxon>
        <taxon>Metazoa</taxon>
        <taxon>Chordata</taxon>
        <taxon>Craniata</taxon>
        <taxon>Vertebrata</taxon>
        <taxon>Euteleostomi</taxon>
        <taxon>Mammalia</taxon>
        <taxon>Eutheria</taxon>
        <taxon>Euarchontoglires</taxon>
        <taxon>Glires</taxon>
        <taxon>Rodentia</taxon>
        <taxon>Myomorpha</taxon>
        <taxon>Muroidea</taxon>
        <taxon>Muridae</taxon>
        <taxon>Murinae</taxon>
        <taxon>Mus</taxon>
        <taxon>Mus</taxon>
    </lineage>
</organism>
<name>PL8L1_MOUSE</name>
<feature type="chain" id="PRO_0000311397" description="PLAC8-like protein 1">
    <location>
        <begin position="1"/>
        <end position="177"/>
    </location>
</feature>
<feature type="sequence conflict" description="In Ref. 2; AAI10559." evidence="1" ref="2">
    <original>V</original>
    <variation>I</variation>
    <location>
        <position position="66"/>
    </location>
</feature>
<proteinExistence type="evidence at transcript level"/>